<protein>
    <recommendedName>
        <fullName evidence="1">Large ribosomal subunit protein uL18</fullName>
    </recommendedName>
    <alternativeName>
        <fullName evidence="2">50S ribosomal protein L18</fullName>
    </alternativeName>
</protein>
<dbReference type="EMBL" id="AE013598">
    <property type="protein sequence ID" value="AAW76821.1"/>
    <property type="status" value="ALT_INIT"/>
    <property type="molecule type" value="Genomic_DNA"/>
</dbReference>
<dbReference type="SMR" id="Q5GWV0"/>
<dbReference type="STRING" id="291331.XOO3567"/>
<dbReference type="KEGG" id="xoo:XOO3567"/>
<dbReference type="HOGENOM" id="CLU_098841_1_0_6"/>
<dbReference type="Proteomes" id="UP000006735">
    <property type="component" value="Chromosome"/>
</dbReference>
<dbReference type="GO" id="GO:0022625">
    <property type="term" value="C:cytosolic large ribosomal subunit"/>
    <property type="evidence" value="ECO:0007669"/>
    <property type="project" value="TreeGrafter"/>
</dbReference>
<dbReference type="GO" id="GO:0008097">
    <property type="term" value="F:5S rRNA binding"/>
    <property type="evidence" value="ECO:0007669"/>
    <property type="project" value="TreeGrafter"/>
</dbReference>
<dbReference type="GO" id="GO:0003735">
    <property type="term" value="F:structural constituent of ribosome"/>
    <property type="evidence" value="ECO:0007669"/>
    <property type="project" value="InterPro"/>
</dbReference>
<dbReference type="GO" id="GO:0006412">
    <property type="term" value="P:translation"/>
    <property type="evidence" value="ECO:0007669"/>
    <property type="project" value="UniProtKB-UniRule"/>
</dbReference>
<dbReference type="CDD" id="cd00432">
    <property type="entry name" value="Ribosomal_L18_L5e"/>
    <property type="match status" value="1"/>
</dbReference>
<dbReference type="FunFam" id="3.30.420.100:FF:000001">
    <property type="entry name" value="50S ribosomal protein L18"/>
    <property type="match status" value="1"/>
</dbReference>
<dbReference type="Gene3D" id="3.30.420.100">
    <property type="match status" value="1"/>
</dbReference>
<dbReference type="HAMAP" id="MF_01337_B">
    <property type="entry name" value="Ribosomal_uL18_B"/>
    <property type="match status" value="1"/>
</dbReference>
<dbReference type="InterPro" id="IPR004389">
    <property type="entry name" value="Ribosomal_uL18_bac-type"/>
</dbReference>
<dbReference type="InterPro" id="IPR005484">
    <property type="entry name" value="Ribosomal_uL18_bac/euk"/>
</dbReference>
<dbReference type="NCBIfam" id="TIGR00060">
    <property type="entry name" value="L18_bact"/>
    <property type="match status" value="1"/>
</dbReference>
<dbReference type="PANTHER" id="PTHR12899">
    <property type="entry name" value="39S RIBOSOMAL PROTEIN L18, MITOCHONDRIAL"/>
    <property type="match status" value="1"/>
</dbReference>
<dbReference type="PANTHER" id="PTHR12899:SF3">
    <property type="entry name" value="LARGE RIBOSOMAL SUBUNIT PROTEIN UL18M"/>
    <property type="match status" value="1"/>
</dbReference>
<dbReference type="Pfam" id="PF00861">
    <property type="entry name" value="Ribosomal_L18p"/>
    <property type="match status" value="1"/>
</dbReference>
<dbReference type="SUPFAM" id="SSF53137">
    <property type="entry name" value="Translational machinery components"/>
    <property type="match status" value="1"/>
</dbReference>
<sequence length="119" mass="12846">MSINKNIARLRRAKSTRSHIRELGVARLSVLRTGQHLYAQVFTADGSKVIAAANTLQADVKDGLKNGKNSDAAVKVGKLIAERAKAAGIEKVAFDRSGYRYHGRIKALADAAREGGLQF</sequence>
<organism>
    <name type="scientific">Xanthomonas oryzae pv. oryzae (strain KACC10331 / KXO85)</name>
    <dbReference type="NCBI Taxonomy" id="291331"/>
    <lineage>
        <taxon>Bacteria</taxon>
        <taxon>Pseudomonadati</taxon>
        <taxon>Pseudomonadota</taxon>
        <taxon>Gammaproteobacteria</taxon>
        <taxon>Lysobacterales</taxon>
        <taxon>Lysobacteraceae</taxon>
        <taxon>Xanthomonas</taxon>
    </lineage>
</organism>
<reference key="1">
    <citation type="journal article" date="2005" name="Nucleic Acids Res.">
        <title>The genome sequence of Xanthomonas oryzae pathovar oryzae KACC10331, the bacterial blight pathogen of rice.</title>
        <authorList>
            <person name="Lee B.-M."/>
            <person name="Park Y.-J."/>
            <person name="Park D.-S."/>
            <person name="Kang H.-W."/>
            <person name="Kim J.-G."/>
            <person name="Song E.-S."/>
            <person name="Park I.-C."/>
            <person name="Yoon U.-H."/>
            <person name="Hahn J.-H."/>
            <person name="Koo B.-S."/>
            <person name="Lee G.-B."/>
            <person name="Kim H."/>
            <person name="Park H.-S."/>
            <person name="Yoon K.-O."/>
            <person name="Kim J.-H."/>
            <person name="Jung C.-H."/>
            <person name="Koh N.-H."/>
            <person name="Seo J.-S."/>
            <person name="Go S.-J."/>
        </authorList>
    </citation>
    <scope>NUCLEOTIDE SEQUENCE [LARGE SCALE GENOMIC DNA]</scope>
    <source>
        <strain>KACC10331 / KXO85</strain>
    </source>
</reference>
<evidence type="ECO:0000255" key="1">
    <source>
        <dbReference type="HAMAP-Rule" id="MF_01337"/>
    </source>
</evidence>
<evidence type="ECO:0000305" key="2"/>
<name>RL18_XANOR</name>
<comment type="function">
    <text evidence="1">This is one of the proteins that bind and probably mediate the attachment of the 5S RNA into the large ribosomal subunit, where it forms part of the central protuberance.</text>
</comment>
<comment type="subunit">
    <text evidence="1">Part of the 50S ribosomal subunit; part of the 5S rRNA/L5/L18/L25 subcomplex. Contacts the 5S and 23S rRNAs.</text>
</comment>
<comment type="similarity">
    <text evidence="1">Belongs to the universal ribosomal protein uL18 family.</text>
</comment>
<comment type="sequence caution" evidence="2">
    <conflict type="erroneous initiation">
        <sequence resource="EMBL-CDS" id="AAW76821"/>
    </conflict>
</comment>
<gene>
    <name evidence="1" type="primary">rplR</name>
    <name type="ordered locus">XOO3567</name>
</gene>
<proteinExistence type="inferred from homology"/>
<feature type="chain" id="PRO_0000131392" description="Large ribosomal subunit protein uL18">
    <location>
        <begin position="1"/>
        <end position="119"/>
    </location>
</feature>
<accession>Q5GWV0</accession>
<keyword id="KW-1185">Reference proteome</keyword>
<keyword id="KW-0687">Ribonucleoprotein</keyword>
<keyword id="KW-0689">Ribosomal protein</keyword>
<keyword id="KW-0694">RNA-binding</keyword>
<keyword id="KW-0699">rRNA-binding</keyword>